<dbReference type="EC" id="1.14.-.-" evidence="1"/>
<dbReference type="EMBL" id="AE017220">
    <property type="protein sequence ID" value="AAX65009.1"/>
    <property type="molecule type" value="Genomic_DNA"/>
</dbReference>
<dbReference type="RefSeq" id="WP_001144626.1">
    <property type="nucleotide sequence ID" value="NC_006905.1"/>
</dbReference>
<dbReference type="SMR" id="Q57QK2"/>
<dbReference type="KEGG" id="sec:SCH_1103"/>
<dbReference type="HOGENOM" id="CLU_038878_1_1_6"/>
<dbReference type="Proteomes" id="UP000000538">
    <property type="component" value="Chromosome"/>
</dbReference>
<dbReference type="GO" id="GO:0016705">
    <property type="term" value="F:oxidoreductase activity, acting on paired donors, with incorporation or reduction of molecular oxygen"/>
    <property type="evidence" value="ECO:0007669"/>
    <property type="project" value="UniProtKB-UniRule"/>
</dbReference>
<dbReference type="GO" id="GO:0006400">
    <property type="term" value="P:tRNA modification"/>
    <property type="evidence" value="ECO:0007669"/>
    <property type="project" value="UniProtKB-UniRule"/>
</dbReference>
<dbReference type="CDD" id="cd01518">
    <property type="entry name" value="RHOD_YceA"/>
    <property type="match status" value="1"/>
</dbReference>
<dbReference type="Gene3D" id="3.30.70.100">
    <property type="match status" value="1"/>
</dbReference>
<dbReference type="Gene3D" id="3.40.250.10">
    <property type="entry name" value="Rhodanese-like domain"/>
    <property type="match status" value="1"/>
</dbReference>
<dbReference type="HAMAP" id="MF_00469">
    <property type="entry name" value="TrhO"/>
    <property type="match status" value="1"/>
</dbReference>
<dbReference type="InterPro" id="IPR001763">
    <property type="entry name" value="Rhodanese-like_dom"/>
</dbReference>
<dbReference type="InterPro" id="IPR036873">
    <property type="entry name" value="Rhodanese-like_dom_sf"/>
</dbReference>
<dbReference type="InterPro" id="IPR022111">
    <property type="entry name" value="Rhodanese_C"/>
</dbReference>
<dbReference type="InterPro" id="IPR020936">
    <property type="entry name" value="TrhO"/>
</dbReference>
<dbReference type="InterPro" id="IPR040503">
    <property type="entry name" value="TRHO_N"/>
</dbReference>
<dbReference type="NCBIfam" id="NF001133">
    <property type="entry name" value="PRK00142.1-1"/>
    <property type="match status" value="1"/>
</dbReference>
<dbReference type="PANTHER" id="PTHR43846:SF1">
    <property type="entry name" value="TRNA URIDINE(34) HYDROXYLASE"/>
    <property type="match status" value="1"/>
</dbReference>
<dbReference type="PANTHER" id="PTHR43846">
    <property type="entry name" value="UPF0176 PROTEIN YCEA"/>
    <property type="match status" value="1"/>
</dbReference>
<dbReference type="Pfam" id="PF00581">
    <property type="entry name" value="Rhodanese"/>
    <property type="match status" value="1"/>
</dbReference>
<dbReference type="Pfam" id="PF12368">
    <property type="entry name" value="Rhodanese_C"/>
    <property type="match status" value="1"/>
</dbReference>
<dbReference type="Pfam" id="PF17773">
    <property type="entry name" value="UPF0176_N"/>
    <property type="match status" value="1"/>
</dbReference>
<dbReference type="SMART" id="SM00450">
    <property type="entry name" value="RHOD"/>
    <property type="match status" value="1"/>
</dbReference>
<dbReference type="SUPFAM" id="SSF52821">
    <property type="entry name" value="Rhodanese/Cell cycle control phosphatase"/>
    <property type="match status" value="1"/>
</dbReference>
<dbReference type="PROSITE" id="PS50206">
    <property type="entry name" value="RHODANESE_3"/>
    <property type="match status" value="1"/>
</dbReference>
<proteinExistence type="inferred from homology"/>
<feature type="chain" id="PRO_0000161507" description="tRNA uridine(34) hydroxylase">
    <location>
        <begin position="1"/>
        <end position="350"/>
    </location>
</feature>
<feature type="domain" description="Rhodanese" evidence="1">
    <location>
        <begin position="146"/>
        <end position="240"/>
    </location>
</feature>
<feature type="region of interest" description="Disordered" evidence="2">
    <location>
        <begin position="319"/>
        <end position="350"/>
    </location>
</feature>
<feature type="compositionally biased region" description="Basic and acidic residues" evidence="2">
    <location>
        <begin position="319"/>
        <end position="328"/>
    </location>
</feature>
<feature type="active site" description="Cysteine persulfide intermediate" evidence="1">
    <location>
        <position position="200"/>
    </location>
</feature>
<name>TRHO_SALCH</name>
<protein>
    <recommendedName>
        <fullName evidence="1">tRNA uridine(34) hydroxylase</fullName>
        <ecNumber evidence="1">1.14.-.-</ecNumber>
    </recommendedName>
    <alternativeName>
        <fullName evidence="1">tRNA hydroxylation protein O</fullName>
    </alternativeName>
</protein>
<accession>Q57QK2</accession>
<gene>
    <name evidence="1" type="primary">trhO</name>
    <name type="synonym">yceA</name>
    <name type="ordered locus">SCH_1103</name>
</gene>
<reference key="1">
    <citation type="journal article" date="2005" name="Nucleic Acids Res.">
        <title>The genome sequence of Salmonella enterica serovar Choleraesuis, a highly invasive and resistant zoonotic pathogen.</title>
        <authorList>
            <person name="Chiu C.-H."/>
            <person name="Tang P."/>
            <person name="Chu C."/>
            <person name="Hu S."/>
            <person name="Bao Q."/>
            <person name="Yu J."/>
            <person name="Chou Y.-Y."/>
            <person name="Wang H.-S."/>
            <person name="Lee Y.-S."/>
        </authorList>
    </citation>
    <scope>NUCLEOTIDE SEQUENCE [LARGE SCALE GENOMIC DNA]</scope>
    <source>
        <strain>SC-B67</strain>
    </source>
</reference>
<comment type="function">
    <text evidence="1">Catalyzes oxygen-dependent 5-hydroxyuridine (ho5U) modification at position 34 in tRNAs.</text>
</comment>
<comment type="catalytic activity">
    <reaction evidence="1">
        <text>uridine(34) in tRNA + AH2 + O2 = 5-hydroxyuridine(34) in tRNA + A + H2O</text>
        <dbReference type="Rhea" id="RHEA:64224"/>
        <dbReference type="Rhea" id="RHEA-COMP:11727"/>
        <dbReference type="Rhea" id="RHEA-COMP:13381"/>
        <dbReference type="ChEBI" id="CHEBI:13193"/>
        <dbReference type="ChEBI" id="CHEBI:15377"/>
        <dbReference type="ChEBI" id="CHEBI:15379"/>
        <dbReference type="ChEBI" id="CHEBI:17499"/>
        <dbReference type="ChEBI" id="CHEBI:65315"/>
        <dbReference type="ChEBI" id="CHEBI:136877"/>
    </reaction>
</comment>
<comment type="similarity">
    <text evidence="1">Belongs to the TrhO family.</text>
</comment>
<evidence type="ECO:0000255" key="1">
    <source>
        <dbReference type="HAMAP-Rule" id="MF_00469"/>
    </source>
</evidence>
<evidence type="ECO:0000256" key="2">
    <source>
        <dbReference type="SAM" id="MobiDB-lite"/>
    </source>
</evidence>
<sequence length="350" mass="39939">MPVLHNRISNDELKAKMLAESEPRTTISFYKYFTIASPQQTRDALYQVFTALDVFGRVYLAHEGINAQISVPQSKLETFRQQLYTFDPALDGLRLNIALEDDGKSFWVLRMKVRDRIVADGIDDPSFDASNVGDYLKAADVNVMLDDPDAVFIDMRNHYEYEVGHFENALEIPADTFREQLPKAVEMLREHADKKIVMYCTGGIRCEKASAWMKHNGFNKVWHIEGGIIEYARRAREQGLPVRFIGKNFVFDERMGERISDEVIAHCHQCGASCDSHTNCKNDGCHLLFIQCPQCASKFNGCCSEQCCEELALPEEEQRRRRAGRENGNKIFNKSRGRLNSKLSIPDPAE</sequence>
<organism>
    <name type="scientific">Salmonella choleraesuis (strain SC-B67)</name>
    <dbReference type="NCBI Taxonomy" id="321314"/>
    <lineage>
        <taxon>Bacteria</taxon>
        <taxon>Pseudomonadati</taxon>
        <taxon>Pseudomonadota</taxon>
        <taxon>Gammaproteobacteria</taxon>
        <taxon>Enterobacterales</taxon>
        <taxon>Enterobacteriaceae</taxon>
        <taxon>Salmonella</taxon>
    </lineage>
</organism>
<keyword id="KW-0560">Oxidoreductase</keyword>
<keyword id="KW-0819">tRNA processing</keyword>